<keyword id="KW-1185">Reference proteome</keyword>
<keyword id="KW-0687">Ribonucleoprotein</keyword>
<keyword id="KW-0689">Ribosomal protein</keyword>
<keyword id="KW-0694">RNA-binding</keyword>
<keyword id="KW-0699">rRNA-binding</keyword>
<gene>
    <name evidence="1" type="primary">rplU</name>
    <name evidence="1" type="synonym">rpl21</name>
    <name type="ordered locus">gll0825</name>
</gene>
<proteinExistence type="inferred from homology"/>
<dbReference type="EMBL" id="BA000045">
    <property type="protein sequence ID" value="BAC88766.1"/>
    <property type="molecule type" value="Genomic_DNA"/>
</dbReference>
<dbReference type="RefSeq" id="NP_923771.1">
    <property type="nucleotide sequence ID" value="NC_005125.1"/>
</dbReference>
<dbReference type="RefSeq" id="WP_011140827.1">
    <property type="nucleotide sequence ID" value="NC_005125.1"/>
</dbReference>
<dbReference type="SMR" id="Q7NME1"/>
<dbReference type="FunCoup" id="Q7NME1">
    <property type="interactions" value="91"/>
</dbReference>
<dbReference type="STRING" id="251221.gene:10758302"/>
<dbReference type="EnsemblBacteria" id="BAC88766">
    <property type="protein sequence ID" value="BAC88766"/>
    <property type="gene ID" value="BAC88766"/>
</dbReference>
<dbReference type="KEGG" id="gvi:gll0825"/>
<dbReference type="PATRIC" id="fig|251221.4.peg.843"/>
<dbReference type="eggNOG" id="COG0261">
    <property type="taxonomic scope" value="Bacteria"/>
</dbReference>
<dbReference type="HOGENOM" id="CLU_061463_1_2_3"/>
<dbReference type="InParanoid" id="Q7NME1"/>
<dbReference type="OrthoDB" id="9813334at2"/>
<dbReference type="PhylomeDB" id="Q7NME1"/>
<dbReference type="Proteomes" id="UP000000557">
    <property type="component" value="Chromosome"/>
</dbReference>
<dbReference type="GO" id="GO:0005737">
    <property type="term" value="C:cytoplasm"/>
    <property type="evidence" value="ECO:0007669"/>
    <property type="project" value="UniProtKB-ARBA"/>
</dbReference>
<dbReference type="GO" id="GO:1990904">
    <property type="term" value="C:ribonucleoprotein complex"/>
    <property type="evidence" value="ECO:0007669"/>
    <property type="project" value="UniProtKB-KW"/>
</dbReference>
<dbReference type="GO" id="GO:0005840">
    <property type="term" value="C:ribosome"/>
    <property type="evidence" value="ECO:0007669"/>
    <property type="project" value="UniProtKB-KW"/>
</dbReference>
<dbReference type="GO" id="GO:0019843">
    <property type="term" value="F:rRNA binding"/>
    <property type="evidence" value="ECO:0007669"/>
    <property type="project" value="UniProtKB-UniRule"/>
</dbReference>
<dbReference type="GO" id="GO:0003735">
    <property type="term" value="F:structural constituent of ribosome"/>
    <property type="evidence" value="ECO:0000318"/>
    <property type="project" value="GO_Central"/>
</dbReference>
<dbReference type="GO" id="GO:0006412">
    <property type="term" value="P:translation"/>
    <property type="evidence" value="ECO:0007669"/>
    <property type="project" value="UniProtKB-UniRule"/>
</dbReference>
<dbReference type="HAMAP" id="MF_01363">
    <property type="entry name" value="Ribosomal_bL21"/>
    <property type="match status" value="1"/>
</dbReference>
<dbReference type="InterPro" id="IPR028909">
    <property type="entry name" value="bL21-like"/>
</dbReference>
<dbReference type="InterPro" id="IPR036164">
    <property type="entry name" value="bL21-like_sf"/>
</dbReference>
<dbReference type="InterPro" id="IPR001787">
    <property type="entry name" value="Ribosomal_bL21"/>
</dbReference>
<dbReference type="InterPro" id="IPR018258">
    <property type="entry name" value="Ribosomal_bL21_CS"/>
</dbReference>
<dbReference type="NCBIfam" id="TIGR00061">
    <property type="entry name" value="L21"/>
    <property type="match status" value="1"/>
</dbReference>
<dbReference type="PANTHER" id="PTHR21349">
    <property type="entry name" value="50S RIBOSOMAL PROTEIN L21"/>
    <property type="match status" value="1"/>
</dbReference>
<dbReference type="PANTHER" id="PTHR21349:SF0">
    <property type="entry name" value="LARGE RIBOSOMAL SUBUNIT PROTEIN BL21M"/>
    <property type="match status" value="1"/>
</dbReference>
<dbReference type="Pfam" id="PF00829">
    <property type="entry name" value="Ribosomal_L21p"/>
    <property type="match status" value="1"/>
</dbReference>
<dbReference type="SUPFAM" id="SSF141091">
    <property type="entry name" value="L21p-like"/>
    <property type="match status" value="1"/>
</dbReference>
<dbReference type="PROSITE" id="PS01169">
    <property type="entry name" value="RIBOSOMAL_L21"/>
    <property type="match status" value="1"/>
</dbReference>
<reference key="1">
    <citation type="journal article" date="2003" name="DNA Res.">
        <title>Complete genome structure of Gloeobacter violaceus PCC 7421, a cyanobacterium that lacks thylakoids.</title>
        <authorList>
            <person name="Nakamura Y."/>
            <person name="Kaneko T."/>
            <person name="Sato S."/>
            <person name="Mimuro M."/>
            <person name="Miyashita H."/>
            <person name="Tsuchiya T."/>
            <person name="Sasamoto S."/>
            <person name="Watanabe A."/>
            <person name="Kawashima K."/>
            <person name="Kishida Y."/>
            <person name="Kiyokawa C."/>
            <person name="Kohara M."/>
            <person name="Matsumoto M."/>
            <person name="Matsuno A."/>
            <person name="Nakazaki N."/>
            <person name="Shimpo S."/>
            <person name="Takeuchi C."/>
            <person name="Yamada M."/>
            <person name="Tabata S."/>
        </authorList>
    </citation>
    <scope>NUCLEOTIDE SEQUENCE [LARGE SCALE GENOMIC DNA]</scope>
    <source>
        <strain>ATCC 29082 / PCC 7421</strain>
    </source>
</reference>
<feature type="chain" id="PRO_0000269323" description="Large ribosomal subunit protein bL21">
    <location>
        <begin position="1"/>
        <end position="121"/>
    </location>
</feature>
<comment type="function">
    <text evidence="1">This protein binds to 23S rRNA in the presence of protein L20.</text>
</comment>
<comment type="subunit">
    <text evidence="1">Part of the 50S ribosomal subunit. Contacts protein L20.</text>
</comment>
<comment type="similarity">
    <text evidence="1">Belongs to the bacterial ribosomal protein bL21 family.</text>
</comment>
<protein>
    <recommendedName>
        <fullName evidence="1">Large ribosomal subunit protein bL21</fullName>
    </recommendedName>
    <alternativeName>
        <fullName evidence="2">50S ribosomal protein L21</fullName>
    </alternativeName>
</protein>
<accession>Q7NME1</accession>
<name>RL21_GLOVI</name>
<sequence length="121" mass="13375">MVYAIVETGGKQVLVQPGRFYDVELLALDVEAALTFDKVLLVRHEGGAVVGRPTVEGAAVQGRILQHGKAAKVTVYKMRPKKGYRRKKGHRQRFTRVMIESIDFEGRSFTAEAKAEAVSST</sequence>
<evidence type="ECO:0000255" key="1">
    <source>
        <dbReference type="HAMAP-Rule" id="MF_01363"/>
    </source>
</evidence>
<evidence type="ECO:0000305" key="2"/>
<organism>
    <name type="scientific">Gloeobacter violaceus (strain ATCC 29082 / PCC 7421)</name>
    <dbReference type="NCBI Taxonomy" id="251221"/>
    <lineage>
        <taxon>Bacteria</taxon>
        <taxon>Bacillati</taxon>
        <taxon>Cyanobacteriota</taxon>
        <taxon>Cyanophyceae</taxon>
        <taxon>Gloeobacterales</taxon>
        <taxon>Gloeobacteraceae</taxon>
        <taxon>Gloeobacter</taxon>
    </lineage>
</organism>